<protein>
    <recommendedName>
        <fullName>Electron transfer flavoprotein subunit beta</fullName>
        <shortName>Beta-ETF</shortName>
    </recommendedName>
    <alternativeName>
        <fullName>Electron transfer flavoprotein small subunit</fullName>
        <shortName>ETFSS</shortName>
    </alternativeName>
</protein>
<accession>P9WNG7</accession>
<accession>L0TBK7</accession>
<accession>O53276</accession>
<accession>P64097</accession>
<proteinExistence type="evidence at protein level"/>
<keyword id="KW-0249">Electron transport</keyword>
<keyword id="KW-0274">FAD</keyword>
<keyword id="KW-0285">Flavoprotein</keyword>
<keyword id="KW-1185">Reference proteome</keyword>
<keyword id="KW-0813">Transport</keyword>
<feature type="chain" id="PRO_0000167882" description="Electron transfer flavoprotein subunit beta">
    <location>
        <begin position="1"/>
        <end position="266"/>
    </location>
</feature>
<name>ETFB_MYCTU</name>
<dbReference type="EMBL" id="AL123456">
    <property type="protein sequence ID" value="CCP45837.1"/>
    <property type="molecule type" value="Genomic_DNA"/>
</dbReference>
<dbReference type="PIR" id="H70858">
    <property type="entry name" value="H70858"/>
</dbReference>
<dbReference type="RefSeq" id="NP_217545.1">
    <property type="nucleotide sequence ID" value="NC_000962.3"/>
</dbReference>
<dbReference type="RefSeq" id="WP_003415921.1">
    <property type="nucleotide sequence ID" value="NZ_NVQJ01000011.1"/>
</dbReference>
<dbReference type="SMR" id="P9WNG7"/>
<dbReference type="FunCoup" id="P9WNG7">
    <property type="interactions" value="393"/>
</dbReference>
<dbReference type="STRING" id="83332.Rv3029c"/>
<dbReference type="PaxDb" id="83332-Rv3029c"/>
<dbReference type="DNASU" id="887670"/>
<dbReference type="GeneID" id="887670"/>
<dbReference type="KEGG" id="mtu:Rv3029c"/>
<dbReference type="KEGG" id="mtv:RVBD_3029c"/>
<dbReference type="TubercuList" id="Rv3029c"/>
<dbReference type="eggNOG" id="COG2086">
    <property type="taxonomic scope" value="Bacteria"/>
</dbReference>
<dbReference type="InParanoid" id="P9WNG7"/>
<dbReference type="OrthoDB" id="9804960at2"/>
<dbReference type="PhylomeDB" id="P9WNG7"/>
<dbReference type="Proteomes" id="UP000001584">
    <property type="component" value="Chromosome"/>
</dbReference>
<dbReference type="GO" id="GO:0005829">
    <property type="term" value="C:cytosol"/>
    <property type="evidence" value="ECO:0007005"/>
    <property type="project" value="MTBBASE"/>
</dbReference>
<dbReference type="GO" id="GO:0009274">
    <property type="term" value="C:peptidoglycan-based cell wall"/>
    <property type="evidence" value="ECO:0007005"/>
    <property type="project" value="MTBBASE"/>
</dbReference>
<dbReference type="GO" id="GO:0005886">
    <property type="term" value="C:plasma membrane"/>
    <property type="evidence" value="ECO:0007005"/>
    <property type="project" value="MTBBASE"/>
</dbReference>
<dbReference type="GO" id="GO:0009055">
    <property type="term" value="F:electron transfer activity"/>
    <property type="evidence" value="ECO:0000318"/>
    <property type="project" value="GO_Central"/>
</dbReference>
<dbReference type="CDD" id="cd01714">
    <property type="entry name" value="ETF_beta"/>
    <property type="match status" value="1"/>
</dbReference>
<dbReference type="FunFam" id="3.40.50.620:FF:000086">
    <property type="entry name" value="Electron transfer flavoprotein subunit beta"/>
    <property type="match status" value="1"/>
</dbReference>
<dbReference type="Gene3D" id="3.40.50.620">
    <property type="entry name" value="HUPs"/>
    <property type="match status" value="1"/>
</dbReference>
<dbReference type="InterPro" id="IPR000049">
    <property type="entry name" value="ET-Flavoprotein_bsu_CS"/>
</dbReference>
<dbReference type="InterPro" id="IPR014730">
    <property type="entry name" value="ETF_a/b_N"/>
</dbReference>
<dbReference type="InterPro" id="IPR012255">
    <property type="entry name" value="ETF_b"/>
</dbReference>
<dbReference type="InterPro" id="IPR033948">
    <property type="entry name" value="ETF_beta_N"/>
</dbReference>
<dbReference type="InterPro" id="IPR014729">
    <property type="entry name" value="Rossmann-like_a/b/a_fold"/>
</dbReference>
<dbReference type="PANTHER" id="PTHR21294">
    <property type="entry name" value="ELECTRON TRANSFER FLAVOPROTEIN BETA-SUBUNIT"/>
    <property type="match status" value="1"/>
</dbReference>
<dbReference type="PANTHER" id="PTHR21294:SF8">
    <property type="entry name" value="ELECTRON TRANSFER FLAVOPROTEIN SUBUNIT BETA"/>
    <property type="match status" value="1"/>
</dbReference>
<dbReference type="Pfam" id="PF01012">
    <property type="entry name" value="ETF"/>
    <property type="match status" value="1"/>
</dbReference>
<dbReference type="PIRSF" id="PIRSF000090">
    <property type="entry name" value="Beta-ETF"/>
    <property type="match status" value="1"/>
</dbReference>
<dbReference type="SMART" id="SM00893">
    <property type="entry name" value="ETF"/>
    <property type="match status" value="1"/>
</dbReference>
<dbReference type="SUPFAM" id="SSF52402">
    <property type="entry name" value="Adenine nucleotide alpha hydrolases-like"/>
    <property type="match status" value="1"/>
</dbReference>
<dbReference type="PROSITE" id="PS01065">
    <property type="entry name" value="ETF_BETA"/>
    <property type="match status" value="1"/>
</dbReference>
<gene>
    <name type="primary">etfB</name>
    <name type="synonym">fixA</name>
    <name type="ordered locus">Rv3029c</name>
    <name type="ORF">MTV012.44c</name>
</gene>
<organism>
    <name type="scientific">Mycobacterium tuberculosis (strain ATCC 25618 / H37Rv)</name>
    <dbReference type="NCBI Taxonomy" id="83332"/>
    <lineage>
        <taxon>Bacteria</taxon>
        <taxon>Bacillati</taxon>
        <taxon>Actinomycetota</taxon>
        <taxon>Actinomycetes</taxon>
        <taxon>Mycobacteriales</taxon>
        <taxon>Mycobacteriaceae</taxon>
        <taxon>Mycobacterium</taxon>
        <taxon>Mycobacterium tuberculosis complex</taxon>
    </lineage>
</organism>
<comment type="function">
    <text evidence="1">The electron transfer flavoprotein serves as a specific electron acceptor for other dehydrogenases. It transfers the electrons to the main respiratory chain via ETF-ubiquinone oxidoreductase (ETF dehydrogenase) (By similarity).</text>
</comment>
<comment type="cofactor">
    <cofactor evidence="1">
        <name>FAD</name>
        <dbReference type="ChEBI" id="CHEBI:57692"/>
    </cofactor>
    <text evidence="1">Binds 1 FAD per dimer.</text>
</comment>
<comment type="cofactor">
    <cofactor evidence="1">
        <name>AMP</name>
        <dbReference type="ChEBI" id="CHEBI:456215"/>
    </cofactor>
    <text evidence="1">Binds 1 AMP per subunit.</text>
</comment>
<comment type="subunit">
    <text evidence="1">Heterodimer of an alpha and a beta subunit.</text>
</comment>
<comment type="similarity">
    <text evidence="2">Belongs to the ETF beta-subunit/FixA family.</text>
</comment>
<sequence>MTNIVVLIKQVPDTWSERKLTDGDFTLDREAADAVLDEINERAVEEALQIREKEAADGIEGSVTVLTAGPERATEAIRKALSMGADKAVHLKDDGMHGSDVIQTGWALARALGTIEGTELVIAGNESTDGVGGAVPAIIAEYLGLPQLTHLRKVSIEGGKITGERETDEGVFTLEATLPAVISVNEKINEPRFPSFKGIMAAKKKEVTVLTLAEIGVESDEVGLANAGSTVLASTPKPAKTAGEKVTDEGEGGNQIVQYLVAQKII</sequence>
<evidence type="ECO:0000250" key="1"/>
<evidence type="ECO:0000305" key="2"/>
<reference key="1">
    <citation type="journal article" date="1998" name="Nature">
        <title>Deciphering the biology of Mycobacterium tuberculosis from the complete genome sequence.</title>
        <authorList>
            <person name="Cole S.T."/>
            <person name="Brosch R."/>
            <person name="Parkhill J."/>
            <person name="Garnier T."/>
            <person name="Churcher C.M."/>
            <person name="Harris D.E."/>
            <person name="Gordon S.V."/>
            <person name="Eiglmeier K."/>
            <person name="Gas S."/>
            <person name="Barry C.E. III"/>
            <person name="Tekaia F."/>
            <person name="Badcock K."/>
            <person name="Basham D."/>
            <person name="Brown D."/>
            <person name="Chillingworth T."/>
            <person name="Connor R."/>
            <person name="Davies R.M."/>
            <person name="Devlin K."/>
            <person name="Feltwell T."/>
            <person name="Gentles S."/>
            <person name="Hamlin N."/>
            <person name="Holroyd S."/>
            <person name="Hornsby T."/>
            <person name="Jagels K."/>
            <person name="Krogh A."/>
            <person name="McLean J."/>
            <person name="Moule S."/>
            <person name="Murphy L.D."/>
            <person name="Oliver S."/>
            <person name="Osborne J."/>
            <person name="Quail M.A."/>
            <person name="Rajandream M.A."/>
            <person name="Rogers J."/>
            <person name="Rutter S."/>
            <person name="Seeger K."/>
            <person name="Skelton S."/>
            <person name="Squares S."/>
            <person name="Squares R."/>
            <person name="Sulston J.E."/>
            <person name="Taylor K."/>
            <person name="Whitehead S."/>
            <person name="Barrell B.G."/>
        </authorList>
    </citation>
    <scope>NUCLEOTIDE SEQUENCE [LARGE SCALE GENOMIC DNA]</scope>
    <source>
        <strain>ATCC 25618 / H37Rv</strain>
    </source>
</reference>
<reference key="2">
    <citation type="journal article" date="2011" name="Mol. Cell. Proteomics">
        <title>Proteogenomic analysis of Mycobacterium tuberculosis by high resolution mass spectrometry.</title>
        <authorList>
            <person name="Kelkar D.S."/>
            <person name="Kumar D."/>
            <person name="Kumar P."/>
            <person name="Balakrishnan L."/>
            <person name="Muthusamy B."/>
            <person name="Yadav A.K."/>
            <person name="Shrivastava P."/>
            <person name="Marimuthu A."/>
            <person name="Anand S."/>
            <person name="Sundaram H."/>
            <person name="Kingsbury R."/>
            <person name="Harsha H.C."/>
            <person name="Nair B."/>
            <person name="Prasad T.S."/>
            <person name="Chauhan D.S."/>
            <person name="Katoch K."/>
            <person name="Katoch V.M."/>
            <person name="Kumar P."/>
            <person name="Chaerkady R."/>
            <person name="Ramachandran S."/>
            <person name="Dash D."/>
            <person name="Pandey A."/>
        </authorList>
    </citation>
    <scope>IDENTIFICATION BY MASS SPECTROMETRY [LARGE SCALE ANALYSIS]</scope>
    <source>
        <strain>ATCC 25618 / H37Rv</strain>
    </source>
</reference>